<dbReference type="EMBL" id="AJ011634">
    <property type="protein sequence ID" value="CAB56586.1"/>
    <property type="molecule type" value="Genomic_DNA"/>
</dbReference>
<dbReference type="EMBL" id="AJ011635">
    <property type="protein sequence ID" value="CAB56587.1"/>
    <property type="molecule type" value="mRNA"/>
</dbReference>
<dbReference type="EMBL" id="AC004557">
    <property type="protein sequence ID" value="AAF99733.1"/>
    <property type="status" value="ALT_INIT"/>
    <property type="molecule type" value="Genomic_DNA"/>
</dbReference>
<dbReference type="EMBL" id="CP002684">
    <property type="protein sequence ID" value="AEE30810.1"/>
    <property type="molecule type" value="Genomic_DNA"/>
</dbReference>
<dbReference type="EMBL" id="CP002684">
    <property type="protein sequence ID" value="AEE30811.1"/>
    <property type="molecule type" value="Genomic_DNA"/>
</dbReference>
<dbReference type="EMBL" id="CP002684">
    <property type="protein sequence ID" value="AEE30812.1"/>
    <property type="molecule type" value="Genomic_DNA"/>
</dbReference>
<dbReference type="EMBL" id="CP002684">
    <property type="protein sequence ID" value="AEE30813.1"/>
    <property type="molecule type" value="Genomic_DNA"/>
</dbReference>
<dbReference type="EMBL" id="AY070106">
    <property type="protein sequence ID" value="AAL49843.1"/>
    <property type="molecule type" value="mRNA"/>
</dbReference>
<dbReference type="EMBL" id="AY091286">
    <property type="protein sequence ID" value="AAM14225.1"/>
    <property type="molecule type" value="mRNA"/>
</dbReference>
<dbReference type="EMBL" id="AY088185">
    <property type="protein sequence ID" value="AAM65728.1"/>
    <property type="molecule type" value="mRNA"/>
</dbReference>
<dbReference type="PIR" id="B86399">
    <property type="entry name" value="B86399"/>
</dbReference>
<dbReference type="PIR" id="T52598">
    <property type="entry name" value="T52598"/>
</dbReference>
<dbReference type="RefSeq" id="NP_001077603.1">
    <property type="nucleotide sequence ID" value="NM_001084134.2"/>
</dbReference>
<dbReference type="RefSeq" id="NP_001077604.1">
    <property type="nucleotide sequence ID" value="NM_001084135.2"/>
</dbReference>
<dbReference type="RefSeq" id="NP_564280.1">
    <property type="nucleotide sequence ID" value="NM_102498.3"/>
</dbReference>
<dbReference type="RefSeq" id="NP_973920.1">
    <property type="nucleotide sequence ID" value="NM_202191.2"/>
</dbReference>
<dbReference type="SMR" id="Q9FZK0"/>
<dbReference type="BioGRID" id="24860">
    <property type="interactions" value="2"/>
</dbReference>
<dbReference type="DIP" id="DIP-60246N"/>
<dbReference type="FunCoup" id="Q9FZK0">
    <property type="interactions" value="1"/>
</dbReference>
<dbReference type="IntAct" id="Q9FZK0">
    <property type="interactions" value="2"/>
</dbReference>
<dbReference type="STRING" id="3702.Q9FZK0"/>
<dbReference type="GlyGen" id="Q9FZK0">
    <property type="glycosylation" value="2 sites, 1 O-linked glycan (2 sites)"/>
</dbReference>
<dbReference type="PaxDb" id="3702-AT1G27360.4"/>
<dbReference type="ProteomicsDB" id="245199"/>
<dbReference type="EnsemblPlants" id="AT1G27360.1">
    <property type="protein sequence ID" value="AT1G27360.1"/>
    <property type="gene ID" value="AT1G27360"/>
</dbReference>
<dbReference type="EnsemblPlants" id="AT1G27360.2">
    <property type="protein sequence ID" value="AT1G27360.2"/>
    <property type="gene ID" value="AT1G27360"/>
</dbReference>
<dbReference type="EnsemblPlants" id="AT1G27360.3">
    <property type="protein sequence ID" value="AT1G27360.3"/>
    <property type="gene ID" value="AT1G27360"/>
</dbReference>
<dbReference type="EnsemblPlants" id="AT1G27360.4">
    <property type="protein sequence ID" value="AT1G27360.4"/>
    <property type="gene ID" value="AT1G27360"/>
</dbReference>
<dbReference type="GeneID" id="839625"/>
<dbReference type="Gramene" id="AT1G27360.1">
    <property type="protein sequence ID" value="AT1G27360.1"/>
    <property type="gene ID" value="AT1G27360"/>
</dbReference>
<dbReference type="Gramene" id="AT1G27360.2">
    <property type="protein sequence ID" value="AT1G27360.2"/>
    <property type="gene ID" value="AT1G27360"/>
</dbReference>
<dbReference type="Gramene" id="AT1G27360.3">
    <property type="protein sequence ID" value="AT1G27360.3"/>
    <property type="gene ID" value="AT1G27360"/>
</dbReference>
<dbReference type="Gramene" id="AT1G27360.4">
    <property type="protein sequence ID" value="AT1G27360.4"/>
    <property type="gene ID" value="AT1G27360"/>
</dbReference>
<dbReference type="KEGG" id="ath:AT1G27360"/>
<dbReference type="Araport" id="AT1G27360"/>
<dbReference type="TAIR" id="AT1G27360">
    <property type="gene designation" value="SPL11"/>
</dbReference>
<dbReference type="eggNOG" id="ENOG502QTXG">
    <property type="taxonomic scope" value="Eukaryota"/>
</dbReference>
<dbReference type="HOGENOM" id="CLU_026055_1_0_1"/>
<dbReference type="InParanoid" id="Q9FZK0"/>
<dbReference type="OMA" id="CFNGLER"/>
<dbReference type="PhylomeDB" id="Q9FZK0"/>
<dbReference type="PRO" id="PR:Q9FZK0"/>
<dbReference type="Proteomes" id="UP000006548">
    <property type="component" value="Chromosome 1"/>
</dbReference>
<dbReference type="ExpressionAtlas" id="Q9FZK0">
    <property type="expression patterns" value="baseline and differential"/>
</dbReference>
<dbReference type="GO" id="GO:0005634">
    <property type="term" value="C:nucleus"/>
    <property type="evidence" value="ECO:0007669"/>
    <property type="project" value="UniProtKB-SubCell"/>
</dbReference>
<dbReference type="GO" id="GO:0003677">
    <property type="term" value="F:DNA binding"/>
    <property type="evidence" value="ECO:0007669"/>
    <property type="project" value="UniProtKB-KW"/>
</dbReference>
<dbReference type="GO" id="GO:0003700">
    <property type="term" value="F:DNA-binding transcription factor activity"/>
    <property type="evidence" value="ECO:0000250"/>
    <property type="project" value="TAIR"/>
</dbReference>
<dbReference type="GO" id="GO:0008270">
    <property type="term" value="F:zinc ion binding"/>
    <property type="evidence" value="ECO:0007669"/>
    <property type="project" value="UniProtKB-KW"/>
</dbReference>
<dbReference type="GO" id="GO:0090356">
    <property type="term" value="P:negative regulation of auxin metabolic process"/>
    <property type="evidence" value="ECO:0000315"/>
    <property type="project" value="TAIR"/>
</dbReference>
<dbReference type="GO" id="GO:0006355">
    <property type="term" value="P:regulation of DNA-templated transcription"/>
    <property type="evidence" value="ECO:0000304"/>
    <property type="project" value="TAIR"/>
</dbReference>
<dbReference type="GO" id="GO:0048510">
    <property type="term" value="P:regulation of timing of transition from vegetative to reproductive phase"/>
    <property type="evidence" value="ECO:0000315"/>
    <property type="project" value="TAIR"/>
</dbReference>
<dbReference type="FunFam" id="4.10.1100.10:FF:000001">
    <property type="entry name" value="Squamosa promoter-binding-like protein 14"/>
    <property type="match status" value="1"/>
</dbReference>
<dbReference type="Gene3D" id="4.10.1100.10">
    <property type="entry name" value="Transcription factor, SBP-box domain"/>
    <property type="match status" value="1"/>
</dbReference>
<dbReference type="InterPro" id="IPR044817">
    <property type="entry name" value="SBP-like"/>
</dbReference>
<dbReference type="InterPro" id="IPR004333">
    <property type="entry name" value="SBP_dom"/>
</dbReference>
<dbReference type="InterPro" id="IPR036893">
    <property type="entry name" value="SBP_sf"/>
</dbReference>
<dbReference type="PANTHER" id="PTHR31251:SF145">
    <property type="entry name" value="SQUAMOSA PROMOTER-BINDING-LIKE PROTEIN 11"/>
    <property type="match status" value="1"/>
</dbReference>
<dbReference type="PANTHER" id="PTHR31251">
    <property type="entry name" value="SQUAMOSA PROMOTER-BINDING-LIKE PROTEIN 4"/>
    <property type="match status" value="1"/>
</dbReference>
<dbReference type="Pfam" id="PF03110">
    <property type="entry name" value="SBP"/>
    <property type="match status" value="1"/>
</dbReference>
<dbReference type="SUPFAM" id="SSF103612">
    <property type="entry name" value="SBT domain"/>
    <property type="match status" value="1"/>
</dbReference>
<dbReference type="PROSITE" id="PS51141">
    <property type="entry name" value="ZF_SBP"/>
    <property type="match status" value="1"/>
</dbReference>
<organism>
    <name type="scientific">Arabidopsis thaliana</name>
    <name type="common">Mouse-ear cress</name>
    <dbReference type="NCBI Taxonomy" id="3702"/>
    <lineage>
        <taxon>Eukaryota</taxon>
        <taxon>Viridiplantae</taxon>
        <taxon>Streptophyta</taxon>
        <taxon>Embryophyta</taxon>
        <taxon>Tracheophyta</taxon>
        <taxon>Spermatophyta</taxon>
        <taxon>Magnoliopsida</taxon>
        <taxon>eudicotyledons</taxon>
        <taxon>Gunneridae</taxon>
        <taxon>Pentapetalae</taxon>
        <taxon>rosids</taxon>
        <taxon>malvids</taxon>
        <taxon>Brassicales</taxon>
        <taxon>Brassicaceae</taxon>
        <taxon>Camelineae</taxon>
        <taxon>Arabidopsis</taxon>
    </lineage>
</organism>
<gene>
    <name type="primary">SPL11</name>
    <name type="ordered locus">At1g27360</name>
    <name type="ORF">F17L21.14</name>
</gene>
<name>SPL11_ARATH</name>
<evidence type="ECO:0000250" key="1"/>
<evidence type="ECO:0000255" key="2"/>
<evidence type="ECO:0000255" key="3">
    <source>
        <dbReference type="PROSITE-ProRule" id="PRU00470"/>
    </source>
</evidence>
<evidence type="ECO:0000256" key="4">
    <source>
        <dbReference type="SAM" id="MobiDB-lite"/>
    </source>
</evidence>
<evidence type="ECO:0000269" key="5">
    <source>
    </source>
</evidence>
<evidence type="ECO:0000269" key="6">
    <source>
    </source>
</evidence>
<evidence type="ECO:0000305" key="7"/>
<evidence type="ECO:0000305" key="8">
    <source>
    </source>
</evidence>
<protein>
    <recommendedName>
        <fullName>Squamosa promoter-binding-like protein 11</fullName>
    </recommendedName>
</protein>
<proteinExistence type="evidence at transcript level"/>
<accession>Q9FZK0</accession>
<accession>Q9ZW54</accession>
<keyword id="KW-0238">DNA-binding</keyword>
<keyword id="KW-0479">Metal-binding</keyword>
<keyword id="KW-0539">Nucleus</keyword>
<keyword id="KW-1185">Reference proteome</keyword>
<keyword id="KW-0804">Transcription</keyword>
<keyword id="KW-0805">Transcription regulation</keyword>
<keyword id="KW-0862">Zinc</keyword>
<keyword id="KW-0863">Zinc-finger</keyword>
<feature type="chain" id="PRO_0000132732" description="Squamosa promoter-binding-like protein 11">
    <location>
        <begin position="1"/>
        <end position="393"/>
    </location>
</feature>
<feature type="zinc finger region" description="SBP-type" evidence="3">
    <location>
        <begin position="172"/>
        <end position="249"/>
    </location>
</feature>
<feature type="region of interest" description="Disordered" evidence="4">
    <location>
        <begin position="74"/>
        <end position="96"/>
    </location>
</feature>
<feature type="short sequence motif" description="Bipartite nuclear localization signal" evidence="2">
    <location>
        <begin position="232"/>
        <end position="248"/>
    </location>
</feature>
<feature type="binding site" evidence="3">
    <location>
        <position position="175"/>
    </location>
    <ligand>
        <name>Zn(2+)</name>
        <dbReference type="ChEBI" id="CHEBI:29105"/>
        <label>1</label>
    </ligand>
</feature>
<feature type="binding site" evidence="3">
    <location>
        <position position="180"/>
    </location>
    <ligand>
        <name>Zn(2+)</name>
        <dbReference type="ChEBI" id="CHEBI:29105"/>
        <label>1</label>
    </ligand>
</feature>
<feature type="binding site" evidence="3">
    <location>
        <position position="197"/>
    </location>
    <ligand>
        <name>Zn(2+)</name>
        <dbReference type="ChEBI" id="CHEBI:29105"/>
        <label>1</label>
    </ligand>
</feature>
<feature type="binding site" evidence="3">
    <location>
        <position position="200"/>
    </location>
    <ligand>
        <name>Zn(2+)</name>
        <dbReference type="ChEBI" id="CHEBI:29105"/>
        <label>1</label>
    </ligand>
</feature>
<feature type="binding site" evidence="3">
    <location>
        <position position="216"/>
    </location>
    <ligand>
        <name>Zn(2+)</name>
        <dbReference type="ChEBI" id="CHEBI:29105"/>
        <label>2</label>
    </ligand>
</feature>
<feature type="binding site" evidence="3">
    <location>
        <position position="219"/>
    </location>
    <ligand>
        <name>Zn(2+)</name>
        <dbReference type="ChEBI" id="CHEBI:29105"/>
        <label>2</label>
    </ligand>
</feature>
<feature type="binding site" evidence="3">
    <location>
        <position position="223"/>
    </location>
    <ligand>
        <name>Zn(2+)</name>
        <dbReference type="ChEBI" id="CHEBI:29105"/>
        <label>2</label>
    </ligand>
</feature>
<feature type="binding site" evidence="3">
    <location>
        <position position="235"/>
    </location>
    <ligand>
        <name>Zn(2+)</name>
        <dbReference type="ChEBI" id="CHEBI:29105"/>
        <label>2</label>
    </ligand>
</feature>
<reference key="1">
    <citation type="journal article" date="1999" name="Gene">
        <title>Molecular characterization of the Arabidopsis SBP-box genes.</title>
        <authorList>
            <person name="Cardon G.H."/>
            <person name="Hoehmann S."/>
            <person name="Klein J."/>
            <person name="Nettesheim K."/>
            <person name="Saedler H."/>
            <person name="Huijser P."/>
        </authorList>
    </citation>
    <scope>NUCLEOTIDE SEQUENCE [GENOMIC DNA / MRNA]</scope>
    <scope>DEVELOPMENTAL STAGE</scope>
    <source>
        <strain>cv. Columbia</strain>
        <tissue>Flower</tissue>
    </source>
</reference>
<reference key="2">
    <citation type="journal article" date="2000" name="Nature">
        <title>Sequence and analysis of chromosome 1 of the plant Arabidopsis thaliana.</title>
        <authorList>
            <person name="Theologis A."/>
            <person name="Ecker J.R."/>
            <person name="Palm C.J."/>
            <person name="Federspiel N.A."/>
            <person name="Kaul S."/>
            <person name="White O."/>
            <person name="Alonso J."/>
            <person name="Altafi H."/>
            <person name="Araujo R."/>
            <person name="Bowman C.L."/>
            <person name="Brooks S.Y."/>
            <person name="Buehler E."/>
            <person name="Chan A."/>
            <person name="Chao Q."/>
            <person name="Chen H."/>
            <person name="Cheuk R.F."/>
            <person name="Chin C.W."/>
            <person name="Chung M.K."/>
            <person name="Conn L."/>
            <person name="Conway A.B."/>
            <person name="Conway A.R."/>
            <person name="Creasy T.H."/>
            <person name="Dewar K."/>
            <person name="Dunn P."/>
            <person name="Etgu P."/>
            <person name="Feldblyum T.V."/>
            <person name="Feng J.-D."/>
            <person name="Fong B."/>
            <person name="Fujii C.Y."/>
            <person name="Gill J.E."/>
            <person name="Goldsmith A.D."/>
            <person name="Haas B."/>
            <person name="Hansen N.F."/>
            <person name="Hughes B."/>
            <person name="Huizar L."/>
            <person name="Hunter J.L."/>
            <person name="Jenkins J."/>
            <person name="Johnson-Hopson C."/>
            <person name="Khan S."/>
            <person name="Khaykin E."/>
            <person name="Kim C.J."/>
            <person name="Koo H.L."/>
            <person name="Kremenetskaia I."/>
            <person name="Kurtz D.B."/>
            <person name="Kwan A."/>
            <person name="Lam B."/>
            <person name="Langin-Hooper S."/>
            <person name="Lee A."/>
            <person name="Lee J.M."/>
            <person name="Lenz C.A."/>
            <person name="Li J.H."/>
            <person name="Li Y.-P."/>
            <person name="Lin X."/>
            <person name="Liu S.X."/>
            <person name="Liu Z.A."/>
            <person name="Luros J.S."/>
            <person name="Maiti R."/>
            <person name="Marziali A."/>
            <person name="Militscher J."/>
            <person name="Miranda M."/>
            <person name="Nguyen M."/>
            <person name="Nierman W.C."/>
            <person name="Osborne B.I."/>
            <person name="Pai G."/>
            <person name="Peterson J."/>
            <person name="Pham P.K."/>
            <person name="Rizzo M."/>
            <person name="Rooney T."/>
            <person name="Rowley D."/>
            <person name="Sakano H."/>
            <person name="Salzberg S.L."/>
            <person name="Schwartz J.R."/>
            <person name="Shinn P."/>
            <person name="Southwick A.M."/>
            <person name="Sun H."/>
            <person name="Tallon L.J."/>
            <person name="Tambunga G."/>
            <person name="Toriumi M.J."/>
            <person name="Town C.D."/>
            <person name="Utterback T."/>
            <person name="Van Aken S."/>
            <person name="Vaysberg M."/>
            <person name="Vysotskaia V.S."/>
            <person name="Walker M."/>
            <person name="Wu D."/>
            <person name="Yu G."/>
            <person name="Fraser C.M."/>
            <person name="Venter J.C."/>
            <person name="Davis R.W."/>
        </authorList>
    </citation>
    <scope>NUCLEOTIDE SEQUENCE [LARGE SCALE GENOMIC DNA]</scope>
    <source>
        <strain>cv. Columbia</strain>
    </source>
</reference>
<reference key="3">
    <citation type="journal article" date="2017" name="Plant J.">
        <title>Araport11: a complete reannotation of the Arabidopsis thaliana reference genome.</title>
        <authorList>
            <person name="Cheng C.Y."/>
            <person name="Krishnakumar V."/>
            <person name="Chan A.P."/>
            <person name="Thibaud-Nissen F."/>
            <person name="Schobel S."/>
            <person name="Town C.D."/>
        </authorList>
    </citation>
    <scope>GENOME REANNOTATION</scope>
    <source>
        <strain>cv. Columbia</strain>
    </source>
</reference>
<reference key="4">
    <citation type="journal article" date="2003" name="Science">
        <title>Empirical analysis of transcriptional activity in the Arabidopsis genome.</title>
        <authorList>
            <person name="Yamada K."/>
            <person name="Lim J."/>
            <person name="Dale J.M."/>
            <person name="Chen H."/>
            <person name="Shinn P."/>
            <person name="Palm C.J."/>
            <person name="Southwick A.M."/>
            <person name="Wu H.C."/>
            <person name="Kim C.J."/>
            <person name="Nguyen M."/>
            <person name="Pham P.K."/>
            <person name="Cheuk R.F."/>
            <person name="Karlin-Newmann G."/>
            <person name="Liu S.X."/>
            <person name="Lam B."/>
            <person name="Sakano H."/>
            <person name="Wu T."/>
            <person name="Yu G."/>
            <person name="Miranda M."/>
            <person name="Quach H.L."/>
            <person name="Tripp M."/>
            <person name="Chang C.H."/>
            <person name="Lee J.M."/>
            <person name="Toriumi M.J."/>
            <person name="Chan M.M."/>
            <person name="Tang C.C."/>
            <person name="Onodera C.S."/>
            <person name="Deng J.M."/>
            <person name="Akiyama K."/>
            <person name="Ansari Y."/>
            <person name="Arakawa T."/>
            <person name="Banh J."/>
            <person name="Banno F."/>
            <person name="Bowser L."/>
            <person name="Brooks S.Y."/>
            <person name="Carninci P."/>
            <person name="Chao Q."/>
            <person name="Choy N."/>
            <person name="Enju A."/>
            <person name="Goldsmith A.D."/>
            <person name="Gurjal M."/>
            <person name="Hansen N.F."/>
            <person name="Hayashizaki Y."/>
            <person name="Johnson-Hopson C."/>
            <person name="Hsuan V.W."/>
            <person name="Iida K."/>
            <person name="Karnes M."/>
            <person name="Khan S."/>
            <person name="Koesema E."/>
            <person name="Ishida J."/>
            <person name="Jiang P.X."/>
            <person name="Jones T."/>
            <person name="Kawai J."/>
            <person name="Kamiya A."/>
            <person name="Meyers C."/>
            <person name="Nakajima M."/>
            <person name="Narusaka M."/>
            <person name="Seki M."/>
            <person name="Sakurai T."/>
            <person name="Satou M."/>
            <person name="Tamse R."/>
            <person name="Vaysberg M."/>
            <person name="Wallender E.K."/>
            <person name="Wong C."/>
            <person name="Yamamura Y."/>
            <person name="Yuan S."/>
            <person name="Shinozaki K."/>
            <person name="Davis R.W."/>
            <person name="Theologis A."/>
            <person name="Ecker J.R."/>
        </authorList>
    </citation>
    <scope>NUCLEOTIDE SEQUENCE [LARGE SCALE MRNA]</scope>
    <source>
        <strain>cv. Columbia</strain>
    </source>
</reference>
<reference key="5">
    <citation type="submission" date="2002-03" db="EMBL/GenBank/DDBJ databases">
        <title>Full-length cDNA from Arabidopsis thaliana.</title>
        <authorList>
            <person name="Brover V.V."/>
            <person name="Troukhan M.E."/>
            <person name="Alexandrov N.A."/>
            <person name="Lu Y.-P."/>
            <person name="Flavell R.B."/>
            <person name="Feldmann K.A."/>
        </authorList>
    </citation>
    <scope>NUCLEOTIDE SEQUENCE [LARGE SCALE MRNA]</scope>
</reference>
<reference key="6">
    <citation type="journal article" date="2002" name="Cell">
        <title>Prediction of plant microRNA targets.</title>
        <authorList>
            <person name="Rhoades M.W."/>
            <person name="Reinhart B.J."/>
            <person name="Lim L.P."/>
            <person name="Burge C.B."/>
            <person name="Bartel B."/>
            <person name="Bartel D.P."/>
        </authorList>
    </citation>
    <scope>INDUCTION</scope>
</reference>
<reference key="7">
    <citation type="journal article" date="2003" name="Development">
        <title>Dissection of floral induction pathways using global expression analysis.</title>
        <authorList>
            <person name="Schmid M."/>
            <person name="Uhlenhaut N.H."/>
            <person name="Godard F."/>
            <person name="Demar M."/>
            <person name="Bressan R."/>
            <person name="Weigel D."/>
            <person name="Lohmann J.U."/>
        </authorList>
    </citation>
    <scope>DEVELOPMENTAL STAGE</scope>
</reference>
<comment type="function">
    <text evidence="1">Trans-acting factor that binds specifically to the consensus nucleotide sequence 5'-TNCGTACAA-3'.</text>
</comment>
<comment type="cofactor">
    <cofactor evidence="1">
        <name>Zn(2+)</name>
        <dbReference type="ChEBI" id="CHEBI:29105"/>
    </cofactor>
    <text evidence="1">Binds 2 Zn(2+) ions per subunit.</text>
</comment>
<comment type="subcellular location">
    <subcellularLocation>
        <location evidence="7">Nucleus</location>
    </subcellularLocation>
</comment>
<comment type="developmental stage">
    <text evidence="5 6">Expressed constitutively during plant development, weak increase during flowering.</text>
</comment>
<comment type="induction">
    <text evidence="8">Negatively regulated by microRNAs miR156 and miR157.</text>
</comment>
<comment type="domain">
    <text>The SBP-type zinc finger is required for the binding to DNA.</text>
</comment>
<comment type="sequence caution" evidence="7">
    <conflict type="erroneous initiation">
        <sequence resource="EMBL-CDS" id="AAF99733"/>
    </conflict>
</comment>
<sequence>MDCNMVSSSQWDWEHLIMSNPSRTEDDSKQLPTEWEIEKGEGIESIVPHFSGLERVSSGSATSFWHTAVSKSSQSTSINSSSPEAKRCKLASESSPGDSCSNIDFVQVKAPTALEVSVASAESDLCLKLGKRTYSEEYWGRNNNEISAVSMKLLTPSVVAGKSKLCGQSMPVPRCQIDGCELDLSSAKGYHRKHKVCEKHSKCPKVSVSGLERRFCQQCSRFHAVSEFDEKKRSCRKRLSHHNARRRKPQGVFSMNPERVYDRRQHTNMLWNGVSLNARSEEMYEWGNNTYDTKPRQTEKSFTLSFQRGNGSEDQLVASSSRMFSTSQTSGGFPAGKSKFQLHGEDVGEYSGVLHESQDIHRALSLLSTSSDPLAQPHVQPFSLLCSYDVVPK</sequence>